<accession>B4TJR9</accession>
<reference key="1">
    <citation type="journal article" date="2011" name="J. Bacteriol.">
        <title>Comparative genomics of 28 Salmonella enterica isolates: evidence for CRISPR-mediated adaptive sublineage evolution.</title>
        <authorList>
            <person name="Fricke W.F."/>
            <person name="Mammel M.K."/>
            <person name="McDermott P.F."/>
            <person name="Tartera C."/>
            <person name="White D.G."/>
            <person name="Leclerc J.E."/>
            <person name="Ravel J."/>
            <person name="Cebula T.A."/>
        </authorList>
    </citation>
    <scope>NUCLEOTIDE SEQUENCE [LARGE SCALE GENOMIC DNA]</scope>
    <source>
        <strain>SL476</strain>
    </source>
</reference>
<dbReference type="EMBL" id="CP001120">
    <property type="protein sequence ID" value="ACF69564.1"/>
    <property type="molecule type" value="Genomic_DNA"/>
</dbReference>
<dbReference type="RefSeq" id="WP_000847559.1">
    <property type="nucleotide sequence ID" value="NC_011083.1"/>
</dbReference>
<dbReference type="SMR" id="B4TJR9"/>
<dbReference type="GeneID" id="89518067"/>
<dbReference type="KEGG" id="seh:SeHA_C3643"/>
<dbReference type="HOGENOM" id="CLU_082184_2_2_6"/>
<dbReference type="Proteomes" id="UP000001866">
    <property type="component" value="Chromosome"/>
</dbReference>
<dbReference type="GO" id="GO:0022625">
    <property type="term" value="C:cytosolic large ribosomal subunit"/>
    <property type="evidence" value="ECO:0007669"/>
    <property type="project" value="TreeGrafter"/>
</dbReference>
<dbReference type="GO" id="GO:0003729">
    <property type="term" value="F:mRNA binding"/>
    <property type="evidence" value="ECO:0007669"/>
    <property type="project" value="TreeGrafter"/>
</dbReference>
<dbReference type="GO" id="GO:0003735">
    <property type="term" value="F:structural constituent of ribosome"/>
    <property type="evidence" value="ECO:0007669"/>
    <property type="project" value="InterPro"/>
</dbReference>
<dbReference type="GO" id="GO:0017148">
    <property type="term" value="P:negative regulation of translation"/>
    <property type="evidence" value="ECO:0007669"/>
    <property type="project" value="TreeGrafter"/>
</dbReference>
<dbReference type="GO" id="GO:0006412">
    <property type="term" value="P:translation"/>
    <property type="evidence" value="ECO:0007669"/>
    <property type="project" value="UniProtKB-UniRule"/>
</dbReference>
<dbReference type="CDD" id="cd00392">
    <property type="entry name" value="Ribosomal_L13"/>
    <property type="match status" value="1"/>
</dbReference>
<dbReference type="FunFam" id="3.90.1180.10:FF:000001">
    <property type="entry name" value="50S ribosomal protein L13"/>
    <property type="match status" value="1"/>
</dbReference>
<dbReference type="Gene3D" id="3.90.1180.10">
    <property type="entry name" value="Ribosomal protein L13"/>
    <property type="match status" value="1"/>
</dbReference>
<dbReference type="HAMAP" id="MF_01366">
    <property type="entry name" value="Ribosomal_uL13"/>
    <property type="match status" value="1"/>
</dbReference>
<dbReference type="InterPro" id="IPR005822">
    <property type="entry name" value="Ribosomal_uL13"/>
</dbReference>
<dbReference type="InterPro" id="IPR005823">
    <property type="entry name" value="Ribosomal_uL13_bac-type"/>
</dbReference>
<dbReference type="InterPro" id="IPR023563">
    <property type="entry name" value="Ribosomal_uL13_CS"/>
</dbReference>
<dbReference type="InterPro" id="IPR036899">
    <property type="entry name" value="Ribosomal_uL13_sf"/>
</dbReference>
<dbReference type="NCBIfam" id="TIGR01066">
    <property type="entry name" value="rplM_bact"/>
    <property type="match status" value="1"/>
</dbReference>
<dbReference type="PANTHER" id="PTHR11545:SF2">
    <property type="entry name" value="LARGE RIBOSOMAL SUBUNIT PROTEIN UL13M"/>
    <property type="match status" value="1"/>
</dbReference>
<dbReference type="PANTHER" id="PTHR11545">
    <property type="entry name" value="RIBOSOMAL PROTEIN L13"/>
    <property type="match status" value="1"/>
</dbReference>
<dbReference type="Pfam" id="PF00572">
    <property type="entry name" value="Ribosomal_L13"/>
    <property type="match status" value="1"/>
</dbReference>
<dbReference type="PIRSF" id="PIRSF002181">
    <property type="entry name" value="Ribosomal_L13"/>
    <property type="match status" value="1"/>
</dbReference>
<dbReference type="SUPFAM" id="SSF52161">
    <property type="entry name" value="Ribosomal protein L13"/>
    <property type="match status" value="1"/>
</dbReference>
<dbReference type="PROSITE" id="PS00783">
    <property type="entry name" value="RIBOSOMAL_L13"/>
    <property type="match status" value="1"/>
</dbReference>
<organism>
    <name type="scientific">Salmonella heidelberg (strain SL476)</name>
    <dbReference type="NCBI Taxonomy" id="454169"/>
    <lineage>
        <taxon>Bacteria</taxon>
        <taxon>Pseudomonadati</taxon>
        <taxon>Pseudomonadota</taxon>
        <taxon>Gammaproteobacteria</taxon>
        <taxon>Enterobacterales</taxon>
        <taxon>Enterobacteriaceae</taxon>
        <taxon>Salmonella</taxon>
    </lineage>
</organism>
<evidence type="ECO:0000255" key="1">
    <source>
        <dbReference type="HAMAP-Rule" id="MF_01366"/>
    </source>
</evidence>
<evidence type="ECO:0000305" key="2"/>
<feature type="chain" id="PRO_1000144177" description="Large ribosomal subunit protein uL13">
    <location>
        <begin position="1"/>
        <end position="142"/>
    </location>
</feature>
<sequence>MKTFTAKPETVKRDWYVVDATGKTLGRLATELARRLRGKHKAEYTPHVDTGDYIIVLNADKVAVTGNKRTDKVYYHHTGHIGGIKQATFEEMIARRPERVIEIAVKGMLPKGPLGRAMFRKLKVYAGNEHNHAAQQPQVLDI</sequence>
<name>RL13_SALHS</name>
<keyword id="KW-0687">Ribonucleoprotein</keyword>
<keyword id="KW-0689">Ribosomal protein</keyword>
<comment type="function">
    <text evidence="1">This protein is one of the early assembly proteins of the 50S ribosomal subunit, although it is not seen to bind rRNA by itself. It is important during the early stages of 50S assembly.</text>
</comment>
<comment type="subunit">
    <text evidence="1">Part of the 50S ribosomal subunit.</text>
</comment>
<comment type="similarity">
    <text evidence="1">Belongs to the universal ribosomal protein uL13 family.</text>
</comment>
<gene>
    <name evidence="1" type="primary">rplM</name>
    <name type="ordered locus">SeHA_C3643</name>
</gene>
<protein>
    <recommendedName>
        <fullName evidence="1">Large ribosomal subunit protein uL13</fullName>
    </recommendedName>
    <alternativeName>
        <fullName evidence="2">50S ribosomal protein L13</fullName>
    </alternativeName>
</protein>
<proteinExistence type="inferred from homology"/>